<organism>
    <name type="scientific">Acanthamoeba polyphaga mimivirus</name>
    <name type="common">APMV</name>
    <dbReference type="NCBI Taxonomy" id="212035"/>
    <lineage>
        <taxon>Viruses</taxon>
        <taxon>Varidnaviria</taxon>
        <taxon>Bamfordvirae</taxon>
        <taxon>Nucleocytoviricota</taxon>
        <taxon>Megaviricetes</taxon>
        <taxon>Imitervirales</taxon>
        <taxon>Mimiviridae</taxon>
        <taxon>Megamimivirinae</taxon>
        <taxon>Mimivirus</taxon>
        <taxon>Mimivirus bradfordmassiliense</taxon>
    </lineage>
</organism>
<reference key="1">
    <citation type="journal article" date="2004" name="Science">
        <title>The 1.2-megabase genome sequence of Mimivirus.</title>
        <authorList>
            <person name="Raoult D."/>
            <person name="Audic S."/>
            <person name="Robert C."/>
            <person name="Abergel C."/>
            <person name="Renesto P."/>
            <person name="Ogata H."/>
            <person name="La Scola B."/>
            <person name="Susan M."/>
            <person name="Claverie J.-M."/>
        </authorList>
    </citation>
    <scope>NUCLEOTIDE SEQUENCE [LARGE SCALE GENOMIC DNA]</scope>
    <source>
        <strain>Rowbotham-Bradford</strain>
    </source>
</reference>
<accession>Q5UPW5</accession>
<evidence type="ECO:0000255" key="1"/>
<evidence type="ECO:0000305" key="2"/>
<gene>
    <name type="ordered locus">MIMI_L282</name>
</gene>
<comment type="subcellular location">
    <subcellularLocation>
        <location evidence="2">Membrane</location>
        <topology evidence="2">Multi-pass membrane protein</topology>
    </subcellularLocation>
</comment>
<sequence length="152" mass="17670">MENLIVAISNFPAVLPIGLSFLKRDFITFGTITFVSIASFISHLIENHKHGMPGIGFSQQTSYIWNRFDVLGCILSVARFSYLYYNRHGLTVVPIVNNKWLFAMTIPVFILLRVSEYDKYNPNLKTRYIITHCMWHAGIFGLMYYFLKNIVY</sequence>
<proteinExistence type="predicted"/>
<keyword id="KW-0472">Membrane</keyword>
<keyword id="KW-1185">Reference proteome</keyword>
<keyword id="KW-0812">Transmembrane</keyword>
<keyword id="KW-1133">Transmembrane helix</keyword>
<organismHost>
    <name type="scientific">Acanthamoeba polyphaga</name>
    <name type="common">Amoeba</name>
    <dbReference type="NCBI Taxonomy" id="5757"/>
</organismHost>
<name>YL282_MIMIV</name>
<dbReference type="EMBL" id="AY653733">
    <property type="protein sequence ID" value="AAV50554.1"/>
    <property type="molecule type" value="Genomic_DNA"/>
</dbReference>
<dbReference type="KEGG" id="vg:9924897"/>
<dbReference type="OrthoDB" id="34299at10239"/>
<dbReference type="Proteomes" id="UP000001134">
    <property type="component" value="Genome"/>
</dbReference>
<dbReference type="GO" id="GO:0016020">
    <property type="term" value="C:membrane"/>
    <property type="evidence" value="ECO:0007669"/>
    <property type="project" value="UniProtKB-SubCell"/>
</dbReference>
<feature type="chain" id="PRO_0000253242" description="Uncharacterized protein L282">
    <location>
        <begin position="1"/>
        <end position="152"/>
    </location>
</feature>
<feature type="transmembrane region" description="Helical" evidence="1">
    <location>
        <begin position="2"/>
        <end position="22"/>
    </location>
</feature>
<feature type="transmembrane region" description="Helical" evidence="1">
    <location>
        <begin position="26"/>
        <end position="46"/>
    </location>
</feature>
<feature type="transmembrane region" description="Helical" evidence="1">
    <location>
        <begin position="92"/>
        <end position="112"/>
    </location>
</feature>
<feature type="transmembrane region" description="Helical" evidence="1">
    <location>
        <begin position="128"/>
        <end position="148"/>
    </location>
</feature>
<protein>
    <recommendedName>
        <fullName>Uncharacterized protein L282</fullName>
    </recommendedName>
</protein>